<organism>
    <name type="scientific">Serratia proteamaculans (strain 568)</name>
    <dbReference type="NCBI Taxonomy" id="399741"/>
    <lineage>
        <taxon>Bacteria</taxon>
        <taxon>Pseudomonadati</taxon>
        <taxon>Pseudomonadota</taxon>
        <taxon>Gammaproteobacteria</taxon>
        <taxon>Enterobacterales</taxon>
        <taxon>Yersiniaceae</taxon>
        <taxon>Serratia</taxon>
    </lineage>
</organism>
<name>HIS8_SERP5</name>
<protein>
    <recommendedName>
        <fullName evidence="1">Histidinol-phosphate aminotransferase</fullName>
        <ecNumber evidence="1">2.6.1.9</ecNumber>
    </recommendedName>
    <alternativeName>
        <fullName evidence="1">Imidazole acetol-phosphate transaminase</fullName>
    </alternativeName>
</protein>
<comment type="catalytic activity">
    <reaction evidence="1">
        <text>L-histidinol phosphate + 2-oxoglutarate = 3-(imidazol-4-yl)-2-oxopropyl phosphate + L-glutamate</text>
        <dbReference type="Rhea" id="RHEA:23744"/>
        <dbReference type="ChEBI" id="CHEBI:16810"/>
        <dbReference type="ChEBI" id="CHEBI:29985"/>
        <dbReference type="ChEBI" id="CHEBI:57766"/>
        <dbReference type="ChEBI" id="CHEBI:57980"/>
        <dbReference type="EC" id="2.6.1.9"/>
    </reaction>
</comment>
<comment type="cofactor">
    <cofactor evidence="1">
        <name>pyridoxal 5'-phosphate</name>
        <dbReference type="ChEBI" id="CHEBI:597326"/>
    </cofactor>
</comment>
<comment type="pathway">
    <text evidence="1">Amino-acid biosynthesis; L-histidine biosynthesis; L-histidine from 5-phospho-alpha-D-ribose 1-diphosphate: step 7/9.</text>
</comment>
<comment type="subunit">
    <text evidence="1">Homodimer.</text>
</comment>
<comment type="similarity">
    <text evidence="1">Belongs to the class-II pyridoxal-phosphate-dependent aminotransferase family. Histidinol-phosphate aminotransferase subfamily.</text>
</comment>
<sequence>MSIENLARTNVRDLTPYQSARRLGGNGDVWLNANEYPIAPEFQLTAQTFNRYPECQPALVIERYAEYAGVKKEQVLVSRGADEGIELLIRAFCEPGKDAILFCPPTYGMYAVSAETFGVERRTVAAKQDWQLDLPAIADSLDNVKLIYVCSPNNPTGNLIDANDLRSLLEMAKGKAIVAVDEAYIEFCPQASVAGWLNDYPHLAILRTLSKAFALAGLRCGFTLGNEDLIALLLKVIAPYPLSTPVADIAAQALSTEGIRIMRQRVTEIAANRSWLLQALQNCACVEQVFTSDSNYLLARFTASSNVFKTLWDQGIILRDQNKQPGLSGCLRITIGTREECQRVVDALSALPGATKTRQEPM</sequence>
<gene>
    <name evidence="1" type="primary">hisC</name>
    <name type="ordered locus">Spro_1614</name>
</gene>
<dbReference type="EC" id="2.6.1.9" evidence="1"/>
<dbReference type="EMBL" id="CP000826">
    <property type="protein sequence ID" value="ABV40718.1"/>
    <property type="molecule type" value="Genomic_DNA"/>
</dbReference>
<dbReference type="SMR" id="A8GC78"/>
<dbReference type="STRING" id="399741.Spro_1614"/>
<dbReference type="KEGG" id="spe:Spro_1614"/>
<dbReference type="eggNOG" id="COG0079">
    <property type="taxonomic scope" value="Bacteria"/>
</dbReference>
<dbReference type="HOGENOM" id="CLU_017584_3_1_6"/>
<dbReference type="OrthoDB" id="9813612at2"/>
<dbReference type="UniPathway" id="UPA00031">
    <property type="reaction ID" value="UER00012"/>
</dbReference>
<dbReference type="GO" id="GO:0004400">
    <property type="term" value="F:histidinol-phosphate transaminase activity"/>
    <property type="evidence" value="ECO:0007669"/>
    <property type="project" value="UniProtKB-UniRule"/>
</dbReference>
<dbReference type="GO" id="GO:0030170">
    <property type="term" value="F:pyridoxal phosphate binding"/>
    <property type="evidence" value="ECO:0007669"/>
    <property type="project" value="InterPro"/>
</dbReference>
<dbReference type="GO" id="GO:0000105">
    <property type="term" value="P:L-histidine biosynthetic process"/>
    <property type="evidence" value="ECO:0007669"/>
    <property type="project" value="UniProtKB-UniRule"/>
</dbReference>
<dbReference type="CDD" id="cd00609">
    <property type="entry name" value="AAT_like"/>
    <property type="match status" value="1"/>
</dbReference>
<dbReference type="FunFam" id="3.40.640.10:FF:000032">
    <property type="entry name" value="Histidinol-phosphate aminotransferase"/>
    <property type="match status" value="1"/>
</dbReference>
<dbReference type="Gene3D" id="3.90.1150.10">
    <property type="entry name" value="Aspartate Aminotransferase, domain 1"/>
    <property type="match status" value="1"/>
</dbReference>
<dbReference type="Gene3D" id="3.40.640.10">
    <property type="entry name" value="Type I PLP-dependent aspartate aminotransferase-like (Major domain)"/>
    <property type="match status" value="1"/>
</dbReference>
<dbReference type="HAMAP" id="MF_01023">
    <property type="entry name" value="HisC_aminotrans_2"/>
    <property type="match status" value="1"/>
</dbReference>
<dbReference type="InterPro" id="IPR001917">
    <property type="entry name" value="Aminotrans_II_pyridoxalP_BS"/>
</dbReference>
<dbReference type="InterPro" id="IPR004839">
    <property type="entry name" value="Aminotransferase_I/II_large"/>
</dbReference>
<dbReference type="InterPro" id="IPR005861">
    <property type="entry name" value="HisP_aminotrans"/>
</dbReference>
<dbReference type="InterPro" id="IPR015424">
    <property type="entry name" value="PyrdxlP-dep_Trfase"/>
</dbReference>
<dbReference type="InterPro" id="IPR015421">
    <property type="entry name" value="PyrdxlP-dep_Trfase_major"/>
</dbReference>
<dbReference type="InterPro" id="IPR015422">
    <property type="entry name" value="PyrdxlP-dep_Trfase_small"/>
</dbReference>
<dbReference type="NCBIfam" id="TIGR01141">
    <property type="entry name" value="hisC"/>
    <property type="match status" value="1"/>
</dbReference>
<dbReference type="PANTHER" id="PTHR42885:SF2">
    <property type="entry name" value="HISTIDINOL-PHOSPHATE AMINOTRANSFERASE"/>
    <property type="match status" value="1"/>
</dbReference>
<dbReference type="PANTHER" id="PTHR42885">
    <property type="entry name" value="HISTIDINOL-PHOSPHATE AMINOTRANSFERASE-RELATED"/>
    <property type="match status" value="1"/>
</dbReference>
<dbReference type="Pfam" id="PF00155">
    <property type="entry name" value="Aminotran_1_2"/>
    <property type="match status" value="1"/>
</dbReference>
<dbReference type="SUPFAM" id="SSF53383">
    <property type="entry name" value="PLP-dependent transferases"/>
    <property type="match status" value="1"/>
</dbReference>
<dbReference type="PROSITE" id="PS00599">
    <property type="entry name" value="AA_TRANSFER_CLASS_2"/>
    <property type="match status" value="1"/>
</dbReference>
<proteinExistence type="inferred from homology"/>
<feature type="chain" id="PRO_0000319786" description="Histidinol-phosphate aminotransferase">
    <location>
        <begin position="1"/>
        <end position="362"/>
    </location>
</feature>
<feature type="modified residue" description="N6-(pyridoxal phosphate)lysine" evidence="1">
    <location>
        <position position="211"/>
    </location>
</feature>
<accession>A8GC78</accession>
<evidence type="ECO:0000255" key="1">
    <source>
        <dbReference type="HAMAP-Rule" id="MF_01023"/>
    </source>
</evidence>
<keyword id="KW-0028">Amino-acid biosynthesis</keyword>
<keyword id="KW-0032">Aminotransferase</keyword>
<keyword id="KW-0368">Histidine biosynthesis</keyword>
<keyword id="KW-0663">Pyridoxal phosphate</keyword>
<keyword id="KW-0808">Transferase</keyword>
<reference key="1">
    <citation type="submission" date="2007-09" db="EMBL/GenBank/DDBJ databases">
        <title>Complete sequence of chromosome of Serratia proteamaculans 568.</title>
        <authorList>
            <consortium name="US DOE Joint Genome Institute"/>
            <person name="Copeland A."/>
            <person name="Lucas S."/>
            <person name="Lapidus A."/>
            <person name="Barry K."/>
            <person name="Glavina del Rio T."/>
            <person name="Dalin E."/>
            <person name="Tice H."/>
            <person name="Pitluck S."/>
            <person name="Chain P."/>
            <person name="Malfatti S."/>
            <person name="Shin M."/>
            <person name="Vergez L."/>
            <person name="Schmutz J."/>
            <person name="Larimer F."/>
            <person name="Land M."/>
            <person name="Hauser L."/>
            <person name="Kyrpides N."/>
            <person name="Kim E."/>
            <person name="Taghavi S."/>
            <person name="Newman L."/>
            <person name="Vangronsveld J."/>
            <person name="van der Lelie D."/>
            <person name="Richardson P."/>
        </authorList>
    </citation>
    <scope>NUCLEOTIDE SEQUENCE [LARGE SCALE GENOMIC DNA]</scope>
    <source>
        <strain>568</strain>
    </source>
</reference>